<feature type="chain" id="PRO_1000054613" description="Large ribosomal subunit protein uL16">
    <location>
        <begin position="1"/>
        <end position="138"/>
    </location>
</feature>
<feature type="region of interest" description="Disordered" evidence="2">
    <location>
        <begin position="1"/>
        <end position="23"/>
    </location>
</feature>
<feature type="compositionally biased region" description="Basic residues" evidence="2">
    <location>
        <begin position="1"/>
        <end position="16"/>
    </location>
</feature>
<keyword id="KW-0687">Ribonucleoprotein</keyword>
<keyword id="KW-0689">Ribosomal protein</keyword>
<keyword id="KW-0694">RNA-binding</keyword>
<keyword id="KW-0699">rRNA-binding</keyword>
<keyword id="KW-0820">tRNA-binding</keyword>
<dbReference type="EMBL" id="AP009044">
    <property type="protein sequence ID" value="BAF53585.1"/>
    <property type="molecule type" value="Genomic_DNA"/>
</dbReference>
<dbReference type="RefSeq" id="WP_003854302.1">
    <property type="nucleotide sequence ID" value="NC_009342.1"/>
</dbReference>
<dbReference type="SMR" id="A4QBI8"/>
<dbReference type="GeneID" id="1021516"/>
<dbReference type="KEGG" id="cgt:cgR_0615"/>
<dbReference type="HOGENOM" id="CLU_078858_2_1_11"/>
<dbReference type="PhylomeDB" id="A4QBI8"/>
<dbReference type="Proteomes" id="UP000006698">
    <property type="component" value="Chromosome"/>
</dbReference>
<dbReference type="GO" id="GO:0022625">
    <property type="term" value="C:cytosolic large ribosomal subunit"/>
    <property type="evidence" value="ECO:0007669"/>
    <property type="project" value="TreeGrafter"/>
</dbReference>
<dbReference type="GO" id="GO:0019843">
    <property type="term" value="F:rRNA binding"/>
    <property type="evidence" value="ECO:0007669"/>
    <property type="project" value="UniProtKB-UniRule"/>
</dbReference>
<dbReference type="GO" id="GO:0003735">
    <property type="term" value="F:structural constituent of ribosome"/>
    <property type="evidence" value="ECO:0007669"/>
    <property type="project" value="InterPro"/>
</dbReference>
<dbReference type="GO" id="GO:0000049">
    <property type="term" value="F:tRNA binding"/>
    <property type="evidence" value="ECO:0007669"/>
    <property type="project" value="UniProtKB-KW"/>
</dbReference>
<dbReference type="GO" id="GO:0006412">
    <property type="term" value="P:translation"/>
    <property type="evidence" value="ECO:0007669"/>
    <property type="project" value="UniProtKB-UniRule"/>
</dbReference>
<dbReference type="CDD" id="cd01433">
    <property type="entry name" value="Ribosomal_L16_L10e"/>
    <property type="match status" value="1"/>
</dbReference>
<dbReference type="FunFam" id="3.90.1170.10:FF:000001">
    <property type="entry name" value="50S ribosomal protein L16"/>
    <property type="match status" value="1"/>
</dbReference>
<dbReference type="Gene3D" id="3.90.1170.10">
    <property type="entry name" value="Ribosomal protein L10e/L16"/>
    <property type="match status" value="1"/>
</dbReference>
<dbReference type="HAMAP" id="MF_01342">
    <property type="entry name" value="Ribosomal_uL16"/>
    <property type="match status" value="1"/>
</dbReference>
<dbReference type="InterPro" id="IPR047873">
    <property type="entry name" value="Ribosomal_uL16"/>
</dbReference>
<dbReference type="InterPro" id="IPR000114">
    <property type="entry name" value="Ribosomal_uL16_bact-type"/>
</dbReference>
<dbReference type="InterPro" id="IPR020798">
    <property type="entry name" value="Ribosomal_uL16_CS"/>
</dbReference>
<dbReference type="InterPro" id="IPR016180">
    <property type="entry name" value="Ribosomal_uL16_dom"/>
</dbReference>
<dbReference type="InterPro" id="IPR036920">
    <property type="entry name" value="Ribosomal_uL16_sf"/>
</dbReference>
<dbReference type="NCBIfam" id="TIGR01164">
    <property type="entry name" value="rplP_bact"/>
    <property type="match status" value="1"/>
</dbReference>
<dbReference type="PANTHER" id="PTHR12220">
    <property type="entry name" value="50S/60S RIBOSOMAL PROTEIN L16"/>
    <property type="match status" value="1"/>
</dbReference>
<dbReference type="PANTHER" id="PTHR12220:SF13">
    <property type="entry name" value="LARGE RIBOSOMAL SUBUNIT PROTEIN UL16M"/>
    <property type="match status" value="1"/>
</dbReference>
<dbReference type="Pfam" id="PF00252">
    <property type="entry name" value="Ribosomal_L16"/>
    <property type="match status" value="1"/>
</dbReference>
<dbReference type="PRINTS" id="PR00060">
    <property type="entry name" value="RIBOSOMALL16"/>
</dbReference>
<dbReference type="SUPFAM" id="SSF54686">
    <property type="entry name" value="Ribosomal protein L16p/L10e"/>
    <property type="match status" value="1"/>
</dbReference>
<dbReference type="PROSITE" id="PS00586">
    <property type="entry name" value="RIBOSOMAL_L16_1"/>
    <property type="match status" value="1"/>
</dbReference>
<dbReference type="PROSITE" id="PS00701">
    <property type="entry name" value="RIBOSOMAL_L16_2"/>
    <property type="match status" value="1"/>
</dbReference>
<proteinExistence type="inferred from homology"/>
<comment type="function">
    <text evidence="1">Binds 23S rRNA and is also seen to make contacts with the A and possibly P site tRNAs.</text>
</comment>
<comment type="subunit">
    <text evidence="1">Part of the 50S ribosomal subunit.</text>
</comment>
<comment type="similarity">
    <text evidence="1">Belongs to the universal ribosomal protein uL16 family.</text>
</comment>
<sequence>MLIPKRVKYRRQHRPTRSGISKGGNRVTFGEYGIQALEPAYITNRQIESARIAINRHVKRGGKVWINIFPDRPLTQKPLGVRMGSGKGPVEKWVANIKPGRILFEMSYPDEATALEALRRAGQKLPCKVRIVKREDQL</sequence>
<organism>
    <name type="scientific">Corynebacterium glutamicum (strain R)</name>
    <dbReference type="NCBI Taxonomy" id="340322"/>
    <lineage>
        <taxon>Bacteria</taxon>
        <taxon>Bacillati</taxon>
        <taxon>Actinomycetota</taxon>
        <taxon>Actinomycetes</taxon>
        <taxon>Mycobacteriales</taxon>
        <taxon>Corynebacteriaceae</taxon>
        <taxon>Corynebacterium</taxon>
    </lineage>
</organism>
<accession>A4QBI8</accession>
<evidence type="ECO:0000255" key="1">
    <source>
        <dbReference type="HAMAP-Rule" id="MF_01342"/>
    </source>
</evidence>
<evidence type="ECO:0000256" key="2">
    <source>
        <dbReference type="SAM" id="MobiDB-lite"/>
    </source>
</evidence>
<evidence type="ECO:0000305" key="3"/>
<gene>
    <name evidence="1" type="primary">rplP</name>
    <name type="ordered locus">cgR_0615</name>
</gene>
<protein>
    <recommendedName>
        <fullName evidence="1">Large ribosomal subunit protein uL16</fullName>
    </recommendedName>
    <alternativeName>
        <fullName evidence="3">50S ribosomal protein L16</fullName>
    </alternativeName>
</protein>
<name>RL16_CORGB</name>
<reference key="1">
    <citation type="journal article" date="2007" name="Microbiology">
        <title>Comparative analysis of the Corynebacterium glutamicum group and complete genome sequence of strain R.</title>
        <authorList>
            <person name="Yukawa H."/>
            <person name="Omumasaba C.A."/>
            <person name="Nonaka H."/>
            <person name="Kos P."/>
            <person name="Okai N."/>
            <person name="Suzuki N."/>
            <person name="Suda M."/>
            <person name="Tsuge Y."/>
            <person name="Watanabe J."/>
            <person name="Ikeda Y."/>
            <person name="Vertes A.A."/>
            <person name="Inui M."/>
        </authorList>
    </citation>
    <scope>NUCLEOTIDE SEQUENCE [LARGE SCALE GENOMIC DNA]</scope>
    <source>
        <strain>R</strain>
    </source>
</reference>